<comment type="subunit">
    <text>Forms oligomeric structures.</text>
</comment>
<comment type="subcellular location">
    <subcellularLocation>
        <location>Cytoplasm</location>
    </subcellularLocation>
</comment>
<comment type="similarity">
    <text evidence="1">Belongs to the small heat shock protein (HSP20) family.</text>
</comment>
<sequence length="157" mass="17771">MSIIPSFFGGRRSNVFDPFSLDVWDPFKDFPLVTSSASEFGKETAAFVNTHIDWKETPQAHVFKADLPGLKKEEVKVELEEGKVLQISGERNKEKEEKNDKWHRVERSSGKFLRRFRLPENAKVDEVKAAMANGVVTVTVPKVEIKKPEVKAIDISG</sequence>
<protein>
    <recommendedName>
        <fullName>17.8 kDa class I heat shock protein</fullName>
    </recommendedName>
    <alternativeName>
        <fullName>Clone DCHSP17.7</fullName>
    </alternativeName>
</protein>
<organism>
    <name type="scientific">Daucus carota</name>
    <name type="common">Wild carrot</name>
    <dbReference type="NCBI Taxonomy" id="4039"/>
    <lineage>
        <taxon>Eukaryota</taxon>
        <taxon>Viridiplantae</taxon>
        <taxon>Streptophyta</taxon>
        <taxon>Embryophyta</taxon>
        <taxon>Tracheophyta</taxon>
        <taxon>Spermatophyta</taxon>
        <taxon>Magnoliopsida</taxon>
        <taxon>eudicotyledons</taxon>
        <taxon>Gunneridae</taxon>
        <taxon>Pentapetalae</taxon>
        <taxon>asterids</taxon>
        <taxon>campanulids</taxon>
        <taxon>Apiales</taxon>
        <taxon>Apiaceae</taxon>
        <taxon>Apioideae</taxon>
        <taxon>Scandiceae</taxon>
        <taxon>Daucinae</taxon>
        <taxon>Daucus</taxon>
        <taxon>Daucus sect. Daucus</taxon>
    </lineage>
</organism>
<feature type="chain" id="PRO_0000125974" description="17.8 kDa class I heat shock protein">
    <location>
        <begin position="1"/>
        <end position="157"/>
    </location>
</feature>
<feature type="domain" description="sHSP" evidence="1">
    <location>
        <begin position="43"/>
        <end position="157"/>
    </location>
</feature>
<name>HSP11_DAUCA</name>
<evidence type="ECO:0000255" key="1">
    <source>
        <dbReference type="PROSITE-ProRule" id="PRU00285"/>
    </source>
</evidence>
<dbReference type="EMBL" id="X53851">
    <property type="protein sequence ID" value="CAA37847.1"/>
    <property type="molecule type" value="Genomic_DNA"/>
</dbReference>
<dbReference type="PIR" id="S14999">
    <property type="entry name" value="CYPZ77"/>
</dbReference>
<dbReference type="SMR" id="P27396"/>
<dbReference type="GO" id="GO:0005737">
    <property type="term" value="C:cytoplasm"/>
    <property type="evidence" value="ECO:0007669"/>
    <property type="project" value="UniProtKB-SubCell"/>
</dbReference>
<dbReference type="CDD" id="cd06472">
    <property type="entry name" value="ACD_ScHsp26_like"/>
    <property type="match status" value="1"/>
</dbReference>
<dbReference type="FunFam" id="2.60.40.790:FF:000009">
    <property type="entry name" value="17.6 kDa class I heat shock protein-like"/>
    <property type="match status" value="1"/>
</dbReference>
<dbReference type="Gene3D" id="2.60.40.790">
    <property type="match status" value="1"/>
</dbReference>
<dbReference type="InterPro" id="IPR002068">
    <property type="entry name" value="A-crystallin/Hsp20_dom"/>
</dbReference>
<dbReference type="InterPro" id="IPR008978">
    <property type="entry name" value="HSP20-like_chaperone"/>
</dbReference>
<dbReference type="InterPro" id="IPR031107">
    <property type="entry name" value="Small_HSP"/>
</dbReference>
<dbReference type="PANTHER" id="PTHR11527">
    <property type="entry name" value="HEAT-SHOCK PROTEIN 20 FAMILY MEMBER"/>
    <property type="match status" value="1"/>
</dbReference>
<dbReference type="Pfam" id="PF00011">
    <property type="entry name" value="HSP20"/>
    <property type="match status" value="1"/>
</dbReference>
<dbReference type="SUPFAM" id="SSF49764">
    <property type="entry name" value="HSP20-like chaperones"/>
    <property type="match status" value="1"/>
</dbReference>
<dbReference type="PROSITE" id="PS01031">
    <property type="entry name" value="SHSP"/>
    <property type="match status" value="1"/>
</dbReference>
<keyword id="KW-0963">Cytoplasm</keyword>
<keyword id="KW-0346">Stress response</keyword>
<reference key="1">
    <citation type="journal article" date="1991" name="Plant Mol. Biol.">
        <title>Cloning and characterization of genes encoding low molecular weight heat shock proteins from carrot.</title>
        <authorList>
            <person name="Darwish K."/>
            <person name="Wang L."/>
            <person name="Hwang C.H."/>
            <person name="Apuya N."/>
            <person name="Zimmerman J.L."/>
        </authorList>
    </citation>
    <scope>NUCLEOTIDE SEQUENCE [GENOMIC DNA]</scope>
    <source>
        <strain>cv. Danvers Half-long</strain>
    </source>
</reference>
<proteinExistence type="inferred from homology"/>
<accession>P27396</accession>